<accession>P28273</accession>
<accession>D6VWY8</accession>
<accession>O60212</accession>
<feature type="chain" id="PRO_0000208582" description="5-oxoprolinase">
    <location>
        <begin position="1"/>
        <end position="1286"/>
    </location>
</feature>
<feature type="modified residue" description="Phosphoserine" evidence="7">
    <location>
        <position position="930"/>
    </location>
</feature>
<feature type="modified residue" description="Phosphoserine" evidence="6">
    <location>
        <position position="1077"/>
    </location>
</feature>
<feature type="mutagenesis site" description="Impairs ATPase and 5-oxoprolinase activity." evidence="4">
    <original>D</original>
    <variation>A</variation>
    <location>
        <position position="11"/>
    </location>
</feature>
<feature type="mutagenesis site" description="Impairs ATPase and 5-oxoprolinase activity." evidence="4">
    <original>D</original>
    <variation>A</variation>
    <location>
        <position position="324"/>
    </location>
</feature>
<feature type="mutagenesis site" description="Impairs ATPase and 5-oxoprolinase activity; when associated with A-498." evidence="4">
    <original>G</original>
    <variation>A</variation>
    <location>
        <position position="497"/>
    </location>
</feature>
<feature type="mutagenesis site" description="Impairs ATPase and 5-oxoprolinase activity; when associated with A-497." evidence="4">
    <original>G</original>
    <variation>A</variation>
    <location>
        <position position="498"/>
    </location>
</feature>
<dbReference type="EC" id="3.5.2.9" evidence="4"/>
<dbReference type="EMBL" id="X75951">
    <property type="protein sequence ID" value="CAA53558.1"/>
    <property type="molecule type" value="Genomic_DNA"/>
</dbReference>
<dbReference type="EMBL" id="Z28215">
    <property type="protein sequence ID" value="CAA82060.1"/>
    <property type="molecule type" value="Genomic_DNA"/>
</dbReference>
<dbReference type="EMBL" id="X59371">
    <property type="protein sequence ID" value="CAA42015.1"/>
    <property type="molecule type" value="Genomic_DNA"/>
</dbReference>
<dbReference type="EMBL" id="M83295">
    <property type="protein sequence ID" value="AAA34567.1"/>
    <property type="molecule type" value="Genomic_DNA"/>
</dbReference>
<dbReference type="EMBL" id="BK006944">
    <property type="protein sequence ID" value="DAA08954.1"/>
    <property type="molecule type" value="Genomic_DNA"/>
</dbReference>
<dbReference type="PIR" id="S38058">
    <property type="entry name" value="S38058"/>
</dbReference>
<dbReference type="RefSeq" id="NP_012707.1">
    <property type="nucleotide sequence ID" value="NM_001179780.1"/>
</dbReference>
<dbReference type="SMR" id="P28273"/>
<dbReference type="BioGRID" id="33950">
    <property type="interactions" value="66"/>
</dbReference>
<dbReference type="DIP" id="DIP-6558N"/>
<dbReference type="FunCoup" id="P28273">
    <property type="interactions" value="1047"/>
</dbReference>
<dbReference type="IntAct" id="P28273">
    <property type="interactions" value="5"/>
</dbReference>
<dbReference type="MINT" id="P28273"/>
<dbReference type="STRING" id="4932.YKL215C"/>
<dbReference type="iPTMnet" id="P28273"/>
<dbReference type="PaxDb" id="4932-YKL215C"/>
<dbReference type="PeptideAtlas" id="P28273"/>
<dbReference type="EnsemblFungi" id="YKL215C_mRNA">
    <property type="protein sequence ID" value="YKL215C"/>
    <property type="gene ID" value="YKL215C"/>
</dbReference>
<dbReference type="GeneID" id="853665"/>
<dbReference type="KEGG" id="sce:YKL215C"/>
<dbReference type="AGR" id="SGD:S000001698"/>
<dbReference type="SGD" id="S000001698">
    <property type="gene designation" value="OXP1"/>
</dbReference>
<dbReference type="VEuPathDB" id="FungiDB:YKL215C"/>
<dbReference type="eggNOG" id="KOG1939">
    <property type="taxonomic scope" value="Eukaryota"/>
</dbReference>
<dbReference type="GeneTree" id="ENSGT00390000013463"/>
<dbReference type="HOGENOM" id="CLU_002157_0_1_1"/>
<dbReference type="InParanoid" id="P28273"/>
<dbReference type="OMA" id="QMGTQLR"/>
<dbReference type="OrthoDB" id="3643at2759"/>
<dbReference type="BioCyc" id="YEAST:G3O-31973-MONOMER"/>
<dbReference type="BRENDA" id="3.5.2.9">
    <property type="organism ID" value="984"/>
</dbReference>
<dbReference type="Reactome" id="R-SCE-174403">
    <property type="pathway name" value="Glutathione synthesis and recycling"/>
</dbReference>
<dbReference type="SABIO-RK" id="P28273"/>
<dbReference type="BioGRID-ORCS" id="853665">
    <property type="hits" value="0 hits in 10 CRISPR screens"/>
</dbReference>
<dbReference type="PRO" id="PR:P28273"/>
<dbReference type="Proteomes" id="UP000002311">
    <property type="component" value="Chromosome XI"/>
</dbReference>
<dbReference type="RNAct" id="P28273">
    <property type="molecule type" value="protein"/>
</dbReference>
<dbReference type="GO" id="GO:0005737">
    <property type="term" value="C:cytoplasm"/>
    <property type="evidence" value="ECO:0007005"/>
    <property type="project" value="SGD"/>
</dbReference>
<dbReference type="GO" id="GO:0005829">
    <property type="term" value="C:cytosol"/>
    <property type="evidence" value="ECO:0000318"/>
    <property type="project" value="GO_Central"/>
</dbReference>
<dbReference type="GO" id="GO:0017168">
    <property type="term" value="F:5-oxoprolinase (ATP-hydrolyzing) activity"/>
    <property type="evidence" value="ECO:0000314"/>
    <property type="project" value="MGI"/>
</dbReference>
<dbReference type="GO" id="GO:0005524">
    <property type="term" value="F:ATP binding"/>
    <property type="evidence" value="ECO:0007669"/>
    <property type="project" value="UniProtKB-KW"/>
</dbReference>
<dbReference type="GO" id="GO:0006749">
    <property type="term" value="P:glutathione metabolic process"/>
    <property type="evidence" value="ECO:0000314"/>
    <property type="project" value="MGI"/>
</dbReference>
<dbReference type="InterPro" id="IPR049517">
    <property type="entry name" value="ACX-like_C"/>
</dbReference>
<dbReference type="InterPro" id="IPR008040">
    <property type="entry name" value="Hydant_A_N"/>
</dbReference>
<dbReference type="InterPro" id="IPR002821">
    <property type="entry name" value="Hydantoinase_A"/>
</dbReference>
<dbReference type="InterPro" id="IPR003692">
    <property type="entry name" value="Hydantoinase_B"/>
</dbReference>
<dbReference type="InterPro" id="IPR045079">
    <property type="entry name" value="Oxoprolinase-like"/>
</dbReference>
<dbReference type="PANTHER" id="PTHR11365:SF2">
    <property type="entry name" value="5-OXOPROLINASE"/>
    <property type="match status" value="1"/>
</dbReference>
<dbReference type="PANTHER" id="PTHR11365">
    <property type="entry name" value="5-OXOPROLINASE RELATED"/>
    <property type="match status" value="1"/>
</dbReference>
<dbReference type="Pfam" id="PF19278">
    <property type="entry name" value="Hydant_A_C"/>
    <property type="match status" value="1"/>
</dbReference>
<dbReference type="Pfam" id="PF05378">
    <property type="entry name" value="Hydant_A_N"/>
    <property type="match status" value="1"/>
</dbReference>
<dbReference type="Pfam" id="PF01968">
    <property type="entry name" value="Hydantoinase_A"/>
    <property type="match status" value="1"/>
</dbReference>
<dbReference type="Pfam" id="PF02538">
    <property type="entry name" value="Hydantoinase_B"/>
    <property type="match status" value="1"/>
</dbReference>
<organism>
    <name type="scientific">Saccharomyces cerevisiae (strain ATCC 204508 / S288c)</name>
    <name type="common">Baker's yeast</name>
    <dbReference type="NCBI Taxonomy" id="559292"/>
    <lineage>
        <taxon>Eukaryota</taxon>
        <taxon>Fungi</taxon>
        <taxon>Dikarya</taxon>
        <taxon>Ascomycota</taxon>
        <taxon>Saccharomycotina</taxon>
        <taxon>Saccharomycetes</taxon>
        <taxon>Saccharomycetales</taxon>
        <taxon>Saccharomycetaceae</taxon>
        <taxon>Saccharomyces</taxon>
    </lineage>
</organism>
<name>OPLA_YEAST</name>
<sequence>MQKGNIRIAIDKGGTFTDCVGNIGTGKQEHDTVIKLLSVDPKNYPDAPLEGIRRLLEVLEHKTIPRGIPLDISNVRSLRMGTTLATNCALERNGERCAFITTKGFKDSLLIGDQTRPDIFNLNIKKVVPLYDTVVEIDERVTLEDFSEDPYFTKSSPNEQEGILEGNSGEMVRVIKKPDESSVRSILKVLYASGIKSIAIAFLHSYTFPDHERIVGNIAREIGFSHVSLSSEVSPMIKFLPRAHSSVADAYLTPVIKKYLNSISAGLSHAEDTHIQFMQSDGGLVDGGKFSGLKSILSGPAGGVIGYSSTCYDKNNNIPLIGFDMGGTSTDVSRYGDGRLEHVFETVTAGIIIQSPQLDIHTVAAGGSSILSWKNGLFRVGPDSAAADPGPAAYRKGGPLTITDANLFLGRLVPEFFPKIFGPNEDESLDLETTTLKFRELTDVINKDLNSNLTMEEVAYGFIKVANECMARPVRAITEAKGHVVSQHRLVSFGGAGGQHAIAVADSLGIDTVLIHRYSSILSAYGIFLADVIEENQEPCSFILGEPETILKVKKRFLELSKNSIKNLLSQSFSREDIVLERYLNLRYEGTETSLMILQKYDDQWNFREWFSEAHKKEFGFSFDDKRIIIDDIRIRAIGKSGVRKEKTVDEQLIEISHFKKADVSKDASFTQKAYFDNKWVDTAVFKIDDLPAGTIIEGPAILADGTQTNIILPNSQATILNSHIFIKINQKAAKTLSKSGYELDIDPILLSIFSHRFMDIALQMGTQLRKTSVSTNVKERLDFSCALFDSKGNLVANAPHVPVHLGSMSTCISAQAKLWEGKLKPGDVLITNHPDIGGTHLPDITVITPSFSSTGELIFYVASRAHHADIGGILPGSVPPNSKELYEEGTAIYSELVVKEGIFQEELIYKLFVEDPGKYPGCSGSRRFSDNISDLKAQVAANTKGIQLIGSLTKEYDLATILKYMAAIQTNASESIKKMLAKMVEHFGTTKFSGEDRLDDGSLIKLQVIIRPEKEEYIFNFDGTSPQVYGNLNAPEAITNSAILYCLRCLVGEDIPLNQGCLKPLTIKIPAGSLLSPRSGAAVVGGNVLTSQRVTDVILKTFNVMADSQGDCNNFTFGTGGNSGNKTDKQIKGFGYYETICGGSGAGADSWRGSGWNGSDAVHTNMTNTRMTDTEVFERRYPVLLKEFSIRRGSGGKGKYTGGNGVVRDVQFRKAVTASILSERRVIGPHGIKGGQDGSRGENLWVRHSTGALINVGGKNTIYAQPGDRFIIKTPGGGGFGQYKD</sequence>
<evidence type="ECO:0000269" key="1">
    <source>
    </source>
</evidence>
<evidence type="ECO:0000269" key="2">
    <source>
    </source>
</evidence>
<evidence type="ECO:0000269" key="3">
    <source>
    </source>
</evidence>
<evidence type="ECO:0000269" key="4">
    <source>
    </source>
</evidence>
<evidence type="ECO:0000305" key="5"/>
<evidence type="ECO:0007744" key="6">
    <source>
    </source>
</evidence>
<evidence type="ECO:0007744" key="7">
    <source>
    </source>
</evidence>
<gene>
    <name type="primary">OXP1</name>
    <name type="ordered locus">YKL215C</name>
</gene>
<proteinExistence type="evidence at protein level"/>
<reference key="1">
    <citation type="journal article" date="1994" name="Yeast">
        <title>The complete sequencing of a 24.6 kb segment of yeast chromosome XI identified the known loci URA1, SAC1 and TRP3, and revealed 6 new open reading frames including homologues to the threonine dehydratases, membrane transporters, hydantoinases and the phospholipase A2-activating protein.</title>
        <authorList>
            <person name="Tzermia M."/>
            <person name="Horaitis O."/>
            <person name="Alexandraki D."/>
        </authorList>
    </citation>
    <scope>NUCLEOTIDE SEQUENCE [GENOMIC DNA]</scope>
    <source>
        <strain>ATCC 204508 / S288c</strain>
    </source>
</reference>
<reference key="2">
    <citation type="journal article" date="1994" name="Nature">
        <title>Complete DNA sequence of yeast chromosome XI.</title>
        <authorList>
            <person name="Dujon B."/>
            <person name="Alexandraki D."/>
            <person name="Andre B."/>
            <person name="Ansorge W."/>
            <person name="Baladron V."/>
            <person name="Ballesta J.P.G."/>
            <person name="Banrevi A."/>
            <person name="Bolle P.-A."/>
            <person name="Bolotin-Fukuhara M."/>
            <person name="Bossier P."/>
            <person name="Bou G."/>
            <person name="Boyer J."/>
            <person name="Buitrago M.J."/>
            <person name="Cheret G."/>
            <person name="Colleaux L."/>
            <person name="Daignan-Fornier B."/>
            <person name="del Rey F."/>
            <person name="Dion C."/>
            <person name="Domdey H."/>
            <person name="Duesterhoeft A."/>
            <person name="Duesterhus S."/>
            <person name="Entian K.-D."/>
            <person name="Erfle H."/>
            <person name="Esteban P.F."/>
            <person name="Feldmann H."/>
            <person name="Fernandes L."/>
            <person name="Fobo G.M."/>
            <person name="Fritz C."/>
            <person name="Fukuhara H."/>
            <person name="Gabel C."/>
            <person name="Gaillon L."/>
            <person name="Garcia-Cantalejo J.M."/>
            <person name="Garcia-Ramirez J.J."/>
            <person name="Gent M.E."/>
            <person name="Ghazvini M."/>
            <person name="Goffeau A."/>
            <person name="Gonzalez A."/>
            <person name="Grothues D."/>
            <person name="Guerreiro P."/>
            <person name="Hegemann J.H."/>
            <person name="Hewitt N."/>
            <person name="Hilger F."/>
            <person name="Hollenberg C.P."/>
            <person name="Horaitis O."/>
            <person name="Indge K.J."/>
            <person name="Jacquier A."/>
            <person name="James C.M."/>
            <person name="Jauniaux J.-C."/>
            <person name="Jimenez A."/>
            <person name="Keuchel H."/>
            <person name="Kirchrath L."/>
            <person name="Kleine K."/>
            <person name="Koetter P."/>
            <person name="Legrain P."/>
            <person name="Liebl S."/>
            <person name="Louis E.J."/>
            <person name="Maia e Silva A."/>
            <person name="Marck C."/>
            <person name="Monnier A.-L."/>
            <person name="Moestl D."/>
            <person name="Mueller S."/>
            <person name="Obermaier B."/>
            <person name="Oliver S.G."/>
            <person name="Pallier C."/>
            <person name="Pascolo S."/>
            <person name="Pfeiffer F."/>
            <person name="Philippsen P."/>
            <person name="Planta R.J."/>
            <person name="Pohl F.M."/>
            <person name="Pohl T.M."/>
            <person name="Poehlmann R."/>
            <person name="Portetelle D."/>
            <person name="Purnelle B."/>
            <person name="Puzos V."/>
            <person name="Ramezani Rad M."/>
            <person name="Rasmussen S.W."/>
            <person name="Remacha M.A."/>
            <person name="Revuelta J.L."/>
            <person name="Richard G.-F."/>
            <person name="Rieger M."/>
            <person name="Rodrigues-Pousada C."/>
            <person name="Rose M."/>
            <person name="Rupp T."/>
            <person name="Santos M.A."/>
            <person name="Schwager C."/>
            <person name="Sensen C."/>
            <person name="Skala J."/>
            <person name="Soares H."/>
            <person name="Sor F."/>
            <person name="Stegemann J."/>
            <person name="Tettelin H."/>
            <person name="Thierry A."/>
            <person name="Tzermia M."/>
            <person name="Urrestarazu L.A."/>
            <person name="van Dyck L."/>
            <person name="van Vliet-Reedijk J.C."/>
            <person name="Valens M."/>
            <person name="Vandenbol M."/>
            <person name="Vilela C."/>
            <person name="Vissers S."/>
            <person name="von Wettstein D."/>
            <person name="Voss H."/>
            <person name="Wiemann S."/>
            <person name="Xu G."/>
            <person name="Zimmermann J."/>
            <person name="Haasemann M."/>
            <person name="Becker I."/>
            <person name="Mewes H.-W."/>
        </authorList>
    </citation>
    <scope>NUCLEOTIDE SEQUENCE [LARGE SCALE GENOMIC DNA]</scope>
    <source>
        <strain>ATCC 204508 / S288c</strain>
    </source>
</reference>
<reference key="3">
    <citation type="journal article" date="2014" name="G3 (Bethesda)">
        <title>The reference genome sequence of Saccharomyces cerevisiae: Then and now.</title>
        <authorList>
            <person name="Engel S.R."/>
            <person name="Dietrich F.S."/>
            <person name="Fisk D.G."/>
            <person name="Binkley G."/>
            <person name="Balakrishnan R."/>
            <person name="Costanzo M.C."/>
            <person name="Dwight S.S."/>
            <person name="Hitz B.C."/>
            <person name="Karra K."/>
            <person name="Nash R.S."/>
            <person name="Weng S."/>
            <person name="Wong E.D."/>
            <person name="Lloyd P."/>
            <person name="Skrzypek M.S."/>
            <person name="Miyasato S.R."/>
            <person name="Simison M."/>
            <person name="Cherry J.M."/>
        </authorList>
    </citation>
    <scope>GENOME REANNOTATION</scope>
    <source>
        <strain>ATCC 204508 / S288c</strain>
    </source>
</reference>
<reference key="4">
    <citation type="journal article" date="1992" name="Gene">
        <title>Nucleotide sequence of the URA1 gene of Saccharomyces cerevisiae.</title>
        <authorList>
            <person name="Roy A."/>
        </authorList>
    </citation>
    <scope>NUCLEOTIDE SEQUENCE [GENOMIC DNA] OF 1003-1285</scope>
    <source>
        <strain>ATCC 28383 / FL100 / VTT C-80102</strain>
    </source>
</reference>
<reference key="5">
    <citation type="journal article" date="2003" name="Nature">
        <title>Global analysis of protein localization in budding yeast.</title>
        <authorList>
            <person name="Huh W.-K."/>
            <person name="Falvo J.V."/>
            <person name="Gerke L.C."/>
            <person name="Carroll A.S."/>
            <person name="Howson R.W."/>
            <person name="Weissman J.S."/>
            <person name="O'Shea E.K."/>
        </authorList>
    </citation>
    <scope>SUBCELLULAR LOCATION [LARGE SCALE ANALYSIS]</scope>
</reference>
<reference key="6">
    <citation type="journal article" date="2003" name="Nature">
        <title>Global analysis of protein expression in yeast.</title>
        <authorList>
            <person name="Ghaemmaghami S."/>
            <person name="Huh W.-K."/>
            <person name="Bower K."/>
            <person name="Howson R.W."/>
            <person name="Belle A."/>
            <person name="Dephoure N."/>
            <person name="O'Shea E.K."/>
            <person name="Weissman J.S."/>
        </authorList>
    </citation>
    <scope>LEVEL OF PROTEIN EXPRESSION [LARGE SCALE ANALYSIS]</scope>
</reference>
<reference key="7">
    <citation type="journal article" date="2008" name="Mol. Cell. Proteomics">
        <title>A multidimensional chromatography technology for in-depth phosphoproteome analysis.</title>
        <authorList>
            <person name="Albuquerque C.P."/>
            <person name="Smolka M.B."/>
            <person name="Payne S.H."/>
            <person name="Bafna V."/>
            <person name="Eng J."/>
            <person name="Zhou H."/>
        </authorList>
    </citation>
    <scope>PHOSPHORYLATION [LARGE SCALE ANALYSIS] AT SER-1077</scope>
    <scope>IDENTIFICATION BY MASS SPECTROMETRY [LARGE SCALE ANALYSIS]</scope>
</reference>
<reference key="8">
    <citation type="journal article" date="2009" name="Science">
        <title>Global analysis of Cdk1 substrate phosphorylation sites provides insights into evolution.</title>
        <authorList>
            <person name="Holt L.J."/>
            <person name="Tuch B.B."/>
            <person name="Villen J."/>
            <person name="Johnson A.D."/>
            <person name="Gygi S.P."/>
            <person name="Morgan D.O."/>
        </authorList>
    </citation>
    <scope>PHOSPHORYLATION [LARGE SCALE ANALYSIS] AT SER-930</scope>
    <scope>IDENTIFICATION BY MASS SPECTROMETRY [LARGE SCALE ANALYSIS]</scope>
</reference>
<reference key="9">
    <citation type="journal article" date="2010" name="Anal. Chem.">
        <title>Metabolomic analysis via reversed-phase ion-pairing liquid chromatography coupled to a stand alone orbitrap mass spectrometer.</title>
        <authorList>
            <person name="Lu W."/>
            <person name="Clasquin M.F."/>
            <person name="Melamud E."/>
            <person name="Amador-Noguez D."/>
            <person name="Caudy A.A."/>
            <person name="Rabinowitz J.D."/>
        </authorList>
    </citation>
    <scope>FUNCTION</scope>
</reference>
<reference key="10">
    <citation type="journal article" date="2010" name="FEMS Yeast Res.">
        <title>OXP1/YKL215c encodes an ATP-dependent 5-oxoprolinase in Saccharomyces cerevisiae: functional characterization, domain structure and identification of actin-like ATP-binding motifs in eukaryotic 5-oxoprolinases.</title>
        <authorList>
            <person name="Kumar A."/>
            <person name="Bachhawat A.K."/>
        </authorList>
    </citation>
    <scope>FUNCTION</scope>
    <scope>SUBUNIT</scope>
    <scope>CATALYTIC ACTIVITY</scope>
    <scope>BIOPHYSICOCHEMICAL PROPERTIES</scope>
    <scope>MUTAGENESIS OF ASP-11; ASP-324; GLY-497 AND GLY-498</scope>
</reference>
<reference key="11">
    <citation type="journal article" date="2012" name="Proc. Natl. Acad. Sci. U.S.A.">
        <title>N-terminal acetylome analyses and functional insights of the N-terminal acetyltransferase NatB.</title>
        <authorList>
            <person name="Van Damme P."/>
            <person name="Lasa M."/>
            <person name="Polevoda B."/>
            <person name="Gazquez C."/>
            <person name="Elosegui-Artola A."/>
            <person name="Kim D.S."/>
            <person name="De Juan-Pardo E."/>
            <person name="Demeyer K."/>
            <person name="Hole K."/>
            <person name="Larrea E."/>
            <person name="Timmerman E."/>
            <person name="Prieto J."/>
            <person name="Arnesen T."/>
            <person name="Sherman F."/>
            <person name="Gevaert K."/>
            <person name="Aldabe R."/>
        </authorList>
    </citation>
    <scope>IDENTIFICATION BY MASS SPECTROMETRY [LARGE SCALE ANALYSIS]</scope>
</reference>
<comment type="function">
    <text evidence="3 4">Catalyzes the cleavage of 5-oxo-L-proline to form L-glutamate coupled to the hydrolysis of ATP to ADP and inorganic phosphate.</text>
</comment>
<comment type="catalytic activity">
    <reaction evidence="4">
        <text>5-oxo-L-proline + ATP + 2 H2O = L-glutamate + ADP + phosphate + H(+)</text>
        <dbReference type="Rhea" id="RHEA:10348"/>
        <dbReference type="ChEBI" id="CHEBI:15377"/>
        <dbReference type="ChEBI" id="CHEBI:15378"/>
        <dbReference type="ChEBI" id="CHEBI:29985"/>
        <dbReference type="ChEBI" id="CHEBI:30616"/>
        <dbReference type="ChEBI" id="CHEBI:43474"/>
        <dbReference type="ChEBI" id="CHEBI:58402"/>
        <dbReference type="ChEBI" id="CHEBI:456216"/>
        <dbReference type="EC" id="3.5.2.9"/>
    </reaction>
    <physiologicalReaction direction="left-to-right" evidence="4">
        <dbReference type="Rhea" id="RHEA:10349"/>
    </physiologicalReaction>
</comment>
<comment type="biophysicochemical properties">
    <kinetics>
        <KM evidence="4">159 uM for 5-oxoproline</KM>
        <Vmax evidence="4">3.5 nmol/h/ug enzyme</Vmax>
    </kinetics>
</comment>
<comment type="subunit">
    <text evidence="4">Homodimer.</text>
</comment>
<comment type="subcellular location">
    <subcellularLocation>
        <location evidence="1">Cytoplasm</location>
    </subcellularLocation>
</comment>
<comment type="miscellaneous">
    <text evidence="2">Present with 3180 molecules/cell in log phase SD medium.</text>
</comment>
<comment type="similarity">
    <text evidence="5">Belongs to the oxoprolinase family.</text>
</comment>
<keyword id="KW-0067">ATP-binding</keyword>
<keyword id="KW-0963">Cytoplasm</keyword>
<keyword id="KW-0378">Hydrolase</keyword>
<keyword id="KW-0547">Nucleotide-binding</keyword>
<keyword id="KW-0597">Phosphoprotein</keyword>
<keyword id="KW-1185">Reference proteome</keyword>
<protein>
    <recommendedName>
        <fullName>5-oxoprolinase</fullName>
        <ecNumber evidence="4">3.5.2.9</ecNumber>
    </recommendedName>
    <alternativeName>
        <fullName>5-oxo-L-prolinase</fullName>
        <shortName>5-OPase</shortName>
    </alternativeName>
    <alternativeName>
        <fullName>Pyroglutamase</fullName>
    </alternativeName>
</protein>